<proteinExistence type="inferred from homology"/>
<reference key="1">
    <citation type="journal article" date="2008" name="Environ. Microbiol.">
        <title>The complete genome sequence of Moorella thermoacetica (f. Clostridium thermoaceticum).</title>
        <authorList>
            <person name="Pierce E."/>
            <person name="Xie G."/>
            <person name="Barabote R.D."/>
            <person name="Saunders E."/>
            <person name="Han C.S."/>
            <person name="Detter J.C."/>
            <person name="Richardson P."/>
            <person name="Brettin T.S."/>
            <person name="Das A."/>
            <person name="Ljungdahl L.G."/>
            <person name="Ragsdale S.W."/>
        </authorList>
    </citation>
    <scope>NUCLEOTIDE SEQUENCE [LARGE SCALE GENOMIC DNA]</scope>
    <source>
        <strain>ATCC 39073 / JCM 9320</strain>
    </source>
</reference>
<accession>Q2RKU0</accession>
<protein>
    <recommendedName>
        <fullName evidence="1">Ribonuclease H</fullName>
        <shortName evidence="1">RNase H</shortName>
        <ecNumber evidence="1">3.1.26.4</ecNumber>
    </recommendedName>
</protein>
<gene>
    <name evidence="1" type="primary">rnhA</name>
    <name type="ordered locus">Moth_0619</name>
</gene>
<name>RNH_MOOTA</name>
<feature type="chain" id="PRO_0000332629" description="Ribonuclease H">
    <location>
        <begin position="1"/>
        <end position="152"/>
    </location>
</feature>
<feature type="domain" description="RNase H type-1" evidence="2">
    <location>
        <begin position="1"/>
        <end position="142"/>
    </location>
</feature>
<feature type="binding site" evidence="1">
    <location>
        <position position="9"/>
    </location>
    <ligand>
        <name>Mg(2+)</name>
        <dbReference type="ChEBI" id="CHEBI:18420"/>
        <label>1</label>
    </ligand>
</feature>
<feature type="binding site" evidence="1">
    <location>
        <position position="9"/>
    </location>
    <ligand>
        <name>Mg(2+)</name>
        <dbReference type="ChEBI" id="CHEBI:18420"/>
        <label>2</label>
    </ligand>
</feature>
<feature type="binding site" evidence="1">
    <location>
        <position position="47"/>
    </location>
    <ligand>
        <name>Mg(2+)</name>
        <dbReference type="ChEBI" id="CHEBI:18420"/>
        <label>1</label>
    </ligand>
</feature>
<feature type="binding site" evidence="1">
    <location>
        <position position="69"/>
    </location>
    <ligand>
        <name>Mg(2+)</name>
        <dbReference type="ChEBI" id="CHEBI:18420"/>
        <label>1</label>
    </ligand>
</feature>
<feature type="binding site" evidence="1">
    <location>
        <position position="134"/>
    </location>
    <ligand>
        <name>Mg(2+)</name>
        <dbReference type="ChEBI" id="CHEBI:18420"/>
        <label>2</label>
    </ligand>
</feature>
<sequence>MKEVTIYTDGACSGNPGPGGWGAVLIYGDKRKELSGAEPSTTNQRMEITAAIAALRVLKEPCRVHLYSDSAYLVNAFRQGWLARWERNGWLTVKKQPVENQDLWRELLQVASRHQVEWLKVKGHSDNPENNRCDELARAAIAALRRQEIPSS</sequence>
<evidence type="ECO:0000255" key="1">
    <source>
        <dbReference type="HAMAP-Rule" id="MF_00042"/>
    </source>
</evidence>
<evidence type="ECO:0000255" key="2">
    <source>
        <dbReference type="PROSITE-ProRule" id="PRU00408"/>
    </source>
</evidence>
<comment type="function">
    <text evidence="1">Endonuclease that specifically degrades the RNA of RNA-DNA hybrids.</text>
</comment>
<comment type="catalytic activity">
    <reaction evidence="1">
        <text>Endonucleolytic cleavage to 5'-phosphomonoester.</text>
        <dbReference type="EC" id="3.1.26.4"/>
    </reaction>
</comment>
<comment type="cofactor">
    <cofactor evidence="1">
        <name>Mg(2+)</name>
        <dbReference type="ChEBI" id="CHEBI:18420"/>
    </cofactor>
    <text evidence="1">Binds 1 Mg(2+) ion per subunit. May bind a second metal ion at a regulatory site, or after substrate binding.</text>
</comment>
<comment type="subunit">
    <text evidence="1">Monomer.</text>
</comment>
<comment type="subcellular location">
    <subcellularLocation>
        <location evidence="1">Cytoplasm</location>
    </subcellularLocation>
</comment>
<comment type="similarity">
    <text evidence="1">Belongs to the RNase H family.</text>
</comment>
<keyword id="KW-0963">Cytoplasm</keyword>
<keyword id="KW-0255">Endonuclease</keyword>
<keyword id="KW-0378">Hydrolase</keyword>
<keyword id="KW-0460">Magnesium</keyword>
<keyword id="KW-0479">Metal-binding</keyword>
<keyword id="KW-0540">Nuclease</keyword>
<organism>
    <name type="scientific">Moorella thermoacetica (strain ATCC 39073 / JCM 9320)</name>
    <dbReference type="NCBI Taxonomy" id="264732"/>
    <lineage>
        <taxon>Bacteria</taxon>
        <taxon>Bacillati</taxon>
        <taxon>Bacillota</taxon>
        <taxon>Clostridia</taxon>
        <taxon>Moorellales</taxon>
        <taxon>Moorellaceae</taxon>
        <taxon>Moorella</taxon>
    </lineage>
</organism>
<dbReference type="EC" id="3.1.26.4" evidence="1"/>
<dbReference type="EMBL" id="CP000232">
    <property type="protein sequence ID" value="ABC18949.1"/>
    <property type="molecule type" value="Genomic_DNA"/>
</dbReference>
<dbReference type="RefSeq" id="YP_429492.1">
    <property type="nucleotide sequence ID" value="NC_007644.1"/>
</dbReference>
<dbReference type="SMR" id="Q2RKU0"/>
<dbReference type="STRING" id="264732.Moth_0619"/>
<dbReference type="EnsemblBacteria" id="ABC18949">
    <property type="protein sequence ID" value="ABC18949"/>
    <property type="gene ID" value="Moth_0619"/>
</dbReference>
<dbReference type="KEGG" id="mta:Moth_0619"/>
<dbReference type="PATRIC" id="fig|264732.11.peg.664"/>
<dbReference type="eggNOG" id="COG0328">
    <property type="taxonomic scope" value="Bacteria"/>
</dbReference>
<dbReference type="HOGENOM" id="CLU_030894_6_2_9"/>
<dbReference type="OrthoDB" id="7845843at2"/>
<dbReference type="GO" id="GO:0005737">
    <property type="term" value="C:cytoplasm"/>
    <property type="evidence" value="ECO:0007669"/>
    <property type="project" value="UniProtKB-SubCell"/>
</dbReference>
<dbReference type="GO" id="GO:0000287">
    <property type="term" value="F:magnesium ion binding"/>
    <property type="evidence" value="ECO:0007669"/>
    <property type="project" value="UniProtKB-UniRule"/>
</dbReference>
<dbReference type="GO" id="GO:0003676">
    <property type="term" value="F:nucleic acid binding"/>
    <property type="evidence" value="ECO:0007669"/>
    <property type="project" value="InterPro"/>
</dbReference>
<dbReference type="GO" id="GO:0004523">
    <property type="term" value="F:RNA-DNA hybrid ribonuclease activity"/>
    <property type="evidence" value="ECO:0007669"/>
    <property type="project" value="UniProtKB-UniRule"/>
</dbReference>
<dbReference type="GO" id="GO:0043137">
    <property type="term" value="P:DNA replication, removal of RNA primer"/>
    <property type="evidence" value="ECO:0007669"/>
    <property type="project" value="TreeGrafter"/>
</dbReference>
<dbReference type="CDD" id="cd09278">
    <property type="entry name" value="RNase_HI_prokaryote_like"/>
    <property type="match status" value="1"/>
</dbReference>
<dbReference type="FunFam" id="3.30.420.10:FF:000089">
    <property type="entry name" value="Ribonuclease H"/>
    <property type="match status" value="1"/>
</dbReference>
<dbReference type="Gene3D" id="3.30.420.10">
    <property type="entry name" value="Ribonuclease H-like superfamily/Ribonuclease H"/>
    <property type="match status" value="1"/>
</dbReference>
<dbReference type="HAMAP" id="MF_00042">
    <property type="entry name" value="RNase_H"/>
    <property type="match status" value="1"/>
</dbReference>
<dbReference type="InterPro" id="IPR050092">
    <property type="entry name" value="RNase_H"/>
</dbReference>
<dbReference type="InterPro" id="IPR012337">
    <property type="entry name" value="RNaseH-like_sf"/>
</dbReference>
<dbReference type="InterPro" id="IPR002156">
    <property type="entry name" value="RNaseH_domain"/>
</dbReference>
<dbReference type="InterPro" id="IPR036397">
    <property type="entry name" value="RNaseH_sf"/>
</dbReference>
<dbReference type="InterPro" id="IPR022892">
    <property type="entry name" value="RNaseHI"/>
</dbReference>
<dbReference type="NCBIfam" id="NF001236">
    <property type="entry name" value="PRK00203.1"/>
    <property type="match status" value="1"/>
</dbReference>
<dbReference type="PANTHER" id="PTHR10642">
    <property type="entry name" value="RIBONUCLEASE H1"/>
    <property type="match status" value="1"/>
</dbReference>
<dbReference type="PANTHER" id="PTHR10642:SF26">
    <property type="entry name" value="RIBONUCLEASE H1"/>
    <property type="match status" value="1"/>
</dbReference>
<dbReference type="Pfam" id="PF00075">
    <property type="entry name" value="RNase_H"/>
    <property type="match status" value="1"/>
</dbReference>
<dbReference type="SUPFAM" id="SSF53098">
    <property type="entry name" value="Ribonuclease H-like"/>
    <property type="match status" value="1"/>
</dbReference>
<dbReference type="PROSITE" id="PS50879">
    <property type="entry name" value="RNASE_H_1"/>
    <property type="match status" value="1"/>
</dbReference>